<dbReference type="EC" id="6.3.2.13" evidence="1"/>
<dbReference type="EMBL" id="CP000680">
    <property type="protein sequence ID" value="ABP83685.1"/>
    <property type="molecule type" value="Genomic_DNA"/>
</dbReference>
<dbReference type="SMR" id="A4XQR9"/>
<dbReference type="STRING" id="399739.Pmen_0917"/>
<dbReference type="KEGG" id="pmy:Pmen_0917"/>
<dbReference type="PATRIC" id="fig|399739.8.peg.926"/>
<dbReference type="eggNOG" id="COG0769">
    <property type="taxonomic scope" value="Bacteria"/>
</dbReference>
<dbReference type="HOGENOM" id="CLU_022291_3_2_6"/>
<dbReference type="OrthoDB" id="9800958at2"/>
<dbReference type="UniPathway" id="UPA00219"/>
<dbReference type="GO" id="GO:0005737">
    <property type="term" value="C:cytoplasm"/>
    <property type="evidence" value="ECO:0007669"/>
    <property type="project" value="UniProtKB-SubCell"/>
</dbReference>
<dbReference type="GO" id="GO:0005524">
    <property type="term" value="F:ATP binding"/>
    <property type="evidence" value="ECO:0007669"/>
    <property type="project" value="UniProtKB-UniRule"/>
</dbReference>
<dbReference type="GO" id="GO:0000287">
    <property type="term" value="F:magnesium ion binding"/>
    <property type="evidence" value="ECO:0007669"/>
    <property type="project" value="UniProtKB-UniRule"/>
</dbReference>
<dbReference type="GO" id="GO:0008765">
    <property type="term" value="F:UDP-N-acetylmuramoylalanyl-D-glutamate-2,6-diaminopimelate ligase activity"/>
    <property type="evidence" value="ECO:0007669"/>
    <property type="project" value="UniProtKB-UniRule"/>
</dbReference>
<dbReference type="GO" id="GO:0051301">
    <property type="term" value="P:cell division"/>
    <property type="evidence" value="ECO:0007669"/>
    <property type="project" value="UniProtKB-KW"/>
</dbReference>
<dbReference type="GO" id="GO:0071555">
    <property type="term" value="P:cell wall organization"/>
    <property type="evidence" value="ECO:0007669"/>
    <property type="project" value="UniProtKB-KW"/>
</dbReference>
<dbReference type="GO" id="GO:0009252">
    <property type="term" value="P:peptidoglycan biosynthetic process"/>
    <property type="evidence" value="ECO:0007669"/>
    <property type="project" value="UniProtKB-UniRule"/>
</dbReference>
<dbReference type="GO" id="GO:0008360">
    <property type="term" value="P:regulation of cell shape"/>
    <property type="evidence" value="ECO:0007669"/>
    <property type="project" value="UniProtKB-KW"/>
</dbReference>
<dbReference type="Gene3D" id="3.90.190.20">
    <property type="entry name" value="Mur ligase, C-terminal domain"/>
    <property type="match status" value="1"/>
</dbReference>
<dbReference type="Gene3D" id="3.40.1190.10">
    <property type="entry name" value="Mur-like, catalytic domain"/>
    <property type="match status" value="1"/>
</dbReference>
<dbReference type="Gene3D" id="3.40.1390.10">
    <property type="entry name" value="MurE/MurF, N-terminal domain"/>
    <property type="match status" value="1"/>
</dbReference>
<dbReference type="HAMAP" id="MF_00208">
    <property type="entry name" value="MurE"/>
    <property type="match status" value="1"/>
</dbReference>
<dbReference type="InterPro" id="IPR036565">
    <property type="entry name" value="Mur-like_cat_sf"/>
</dbReference>
<dbReference type="InterPro" id="IPR004101">
    <property type="entry name" value="Mur_ligase_C"/>
</dbReference>
<dbReference type="InterPro" id="IPR036615">
    <property type="entry name" value="Mur_ligase_C_dom_sf"/>
</dbReference>
<dbReference type="InterPro" id="IPR013221">
    <property type="entry name" value="Mur_ligase_cen"/>
</dbReference>
<dbReference type="InterPro" id="IPR000713">
    <property type="entry name" value="Mur_ligase_N"/>
</dbReference>
<dbReference type="InterPro" id="IPR035911">
    <property type="entry name" value="MurE/MurF_N"/>
</dbReference>
<dbReference type="InterPro" id="IPR005761">
    <property type="entry name" value="UDP-N-AcMur-Glu-dNH2Pim_ligase"/>
</dbReference>
<dbReference type="NCBIfam" id="TIGR01085">
    <property type="entry name" value="murE"/>
    <property type="match status" value="1"/>
</dbReference>
<dbReference type="NCBIfam" id="NF001124">
    <property type="entry name" value="PRK00139.1-2"/>
    <property type="match status" value="1"/>
</dbReference>
<dbReference type="NCBIfam" id="NF001126">
    <property type="entry name" value="PRK00139.1-4"/>
    <property type="match status" value="1"/>
</dbReference>
<dbReference type="PANTHER" id="PTHR23135">
    <property type="entry name" value="MUR LIGASE FAMILY MEMBER"/>
    <property type="match status" value="1"/>
</dbReference>
<dbReference type="PANTHER" id="PTHR23135:SF4">
    <property type="entry name" value="UDP-N-ACETYLMURAMOYL-L-ALANYL-D-GLUTAMATE--2,6-DIAMINOPIMELATE LIGASE MURE HOMOLOG, CHLOROPLASTIC"/>
    <property type="match status" value="1"/>
</dbReference>
<dbReference type="Pfam" id="PF01225">
    <property type="entry name" value="Mur_ligase"/>
    <property type="match status" value="1"/>
</dbReference>
<dbReference type="Pfam" id="PF02875">
    <property type="entry name" value="Mur_ligase_C"/>
    <property type="match status" value="1"/>
</dbReference>
<dbReference type="Pfam" id="PF08245">
    <property type="entry name" value="Mur_ligase_M"/>
    <property type="match status" value="1"/>
</dbReference>
<dbReference type="SUPFAM" id="SSF53623">
    <property type="entry name" value="MurD-like peptide ligases, catalytic domain"/>
    <property type="match status" value="1"/>
</dbReference>
<dbReference type="SUPFAM" id="SSF53244">
    <property type="entry name" value="MurD-like peptide ligases, peptide-binding domain"/>
    <property type="match status" value="1"/>
</dbReference>
<dbReference type="SUPFAM" id="SSF63418">
    <property type="entry name" value="MurE/MurF N-terminal domain"/>
    <property type="match status" value="1"/>
</dbReference>
<evidence type="ECO:0000255" key="1">
    <source>
        <dbReference type="HAMAP-Rule" id="MF_00208"/>
    </source>
</evidence>
<organism>
    <name type="scientific">Ectopseudomonas mendocina (strain ymp)</name>
    <name type="common">Pseudomonas mendocina</name>
    <dbReference type="NCBI Taxonomy" id="399739"/>
    <lineage>
        <taxon>Bacteria</taxon>
        <taxon>Pseudomonadati</taxon>
        <taxon>Pseudomonadota</taxon>
        <taxon>Gammaproteobacteria</taxon>
        <taxon>Pseudomonadales</taxon>
        <taxon>Pseudomonadaceae</taxon>
        <taxon>Ectopseudomonas</taxon>
    </lineage>
</organism>
<protein>
    <recommendedName>
        <fullName evidence="1">UDP-N-acetylmuramoyl-L-alanyl-D-glutamate--2,6-diaminopimelate ligase</fullName>
        <ecNumber evidence="1">6.3.2.13</ecNumber>
    </recommendedName>
    <alternativeName>
        <fullName evidence="1">Meso-A2pm-adding enzyme</fullName>
    </alternativeName>
    <alternativeName>
        <fullName evidence="1">Meso-diaminopimelate-adding enzyme</fullName>
    </alternativeName>
    <alternativeName>
        <fullName evidence="1">UDP-MurNAc-L-Ala-D-Glu:meso-diaminopimelate ligase</fullName>
    </alternativeName>
    <alternativeName>
        <fullName evidence="1">UDP-MurNAc-tripeptide synthetase</fullName>
    </alternativeName>
    <alternativeName>
        <fullName evidence="1">UDP-N-acetylmuramyl-tripeptide synthetase</fullName>
    </alternativeName>
</protein>
<sequence>MPMPLNQLLPAAESGVLIRELTLDSRKVRPGDLFLAVPGTQQDGRVHIADAVARGAAAVAFEAEGAAPMHAESAVLVPVKGLAGQLSAIAGRFYGEPSRALHLIGVTGTNGKTSVSQLLAQALDLLGERCGIVGTLGTGFHGALEQGKHTTPDPVGVQATLASLKQAGARAVAMEVSSHGLDQGRVAALEFDVAVFTNLSRDHLDYHGSMEAYGAAKAKLFAWPNLRCRVINLDDAFGRELAQQAHDSRLIGYSLSDASAFLYCSEAQFDDHGVRARLVTPRGEGVLRSNLLGRFNLSNLLAVVGALLGMDYGLDEILKVLPQLQGPAGRMQRLGGGDKPLVVVDYAHTPDALEKVLEAMRPHVQGRLVCLFGCGGDRDRGKRPLMAAVAERLADVVWVTDDNPRSEDPAQIVADIRAGFCAPEQVQFIHGRGDAIARLIAQAEAADVLVLAGKGHEDYQEITGVRHPFSDLIEANEALAAWEAAHA</sequence>
<name>MURE_ECTM1</name>
<proteinExistence type="inferred from homology"/>
<accession>A4XQR9</accession>
<gene>
    <name evidence="1" type="primary">murE</name>
    <name type="ordered locus">Pmen_0917</name>
</gene>
<comment type="function">
    <text evidence="1">Catalyzes the addition of meso-diaminopimelic acid to the nucleotide precursor UDP-N-acetylmuramoyl-L-alanyl-D-glutamate (UMAG) in the biosynthesis of bacterial cell-wall peptidoglycan.</text>
</comment>
<comment type="catalytic activity">
    <reaction evidence="1">
        <text>UDP-N-acetyl-alpha-D-muramoyl-L-alanyl-D-glutamate + meso-2,6-diaminopimelate + ATP = UDP-N-acetyl-alpha-D-muramoyl-L-alanyl-gamma-D-glutamyl-meso-2,6-diaminopimelate + ADP + phosphate + H(+)</text>
        <dbReference type="Rhea" id="RHEA:23676"/>
        <dbReference type="ChEBI" id="CHEBI:15378"/>
        <dbReference type="ChEBI" id="CHEBI:30616"/>
        <dbReference type="ChEBI" id="CHEBI:43474"/>
        <dbReference type="ChEBI" id="CHEBI:57791"/>
        <dbReference type="ChEBI" id="CHEBI:83900"/>
        <dbReference type="ChEBI" id="CHEBI:83905"/>
        <dbReference type="ChEBI" id="CHEBI:456216"/>
        <dbReference type="EC" id="6.3.2.13"/>
    </reaction>
</comment>
<comment type="cofactor">
    <cofactor evidence="1">
        <name>Mg(2+)</name>
        <dbReference type="ChEBI" id="CHEBI:18420"/>
    </cofactor>
</comment>
<comment type="pathway">
    <text evidence="1">Cell wall biogenesis; peptidoglycan biosynthesis.</text>
</comment>
<comment type="subcellular location">
    <subcellularLocation>
        <location evidence="1">Cytoplasm</location>
    </subcellularLocation>
</comment>
<comment type="PTM">
    <text evidence="1">Carboxylation is probably crucial for Mg(2+) binding and, consequently, for the gamma-phosphate positioning of ATP.</text>
</comment>
<comment type="similarity">
    <text evidence="1">Belongs to the MurCDEF family. MurE subfamily.</text>
</comment>
<feature type="chain" id="PRO_1000058591" description="UDP-N-acetylmuramoyl-L-alanyl-D-glutamate--2,6-diaminopimelate ligase">
    <location>
        <begin position="1"/>
        <end position="487"/>
    </location>
</feature>
<feature type="short sequence motif" description="Meso-diaminopimelate recognition motif">
    <location>
        <begin position="402"/>
        <end position="405"/>
    </location>
</feature>
<feature type="binding site" evidence="1">
    <location>
        <position position="23"/>
    </location>
    <ligand>
        <name>UDP-N-acetyl-alpha-D-muramoyl-L-alanyl-D-glutamate</name>
        <dbReference type="ChEBI" id="CHEBI:83900"/>
    </ligand>
</feature>
<feature type="binding site" evidence="1">
    <location>
        <position position="25"/>
    </location>
    <ligand>
        <name>UDP-N-acetyl-alpha-D-muramoyl-L-alanyl-D-glutamate</name>
        <dbReference type="ChEBI" id="CHEBI:83900"/>
    </ligand>
</feature>
<feature type="binding site" evidence="1">
    <location>
        <begin position="108"/>
        <end position="114"/>
    </location>
    <ligand>
        <name>ATP</name>
        <dbReference type="ChEBI" id="CHEBI:30616"/>
    </ligand>
</feature>
<feature type="binding site" evidence="1">
    <location>
        <begin position="150"/>
        <end position="151"/>
    </location>
    <ligand>
        <name>UDP-N-acetyl-alpha-D-muramoyl-L-alanyl-D-glutamate</name>
        <dbReference type="ChEBI" id="CHEBI:83900"/>
    </ligand>
</feature>
<feature type="binding site" evidence="1">
    <location>
        <position position="177"/>
    </location>
    <ligand>
        <name>UDP-N-acetyl-alpha-D-muramoyl-L-alanyl-D-glutamate</name>
        <dbReference type="ChEBI" id="CHEBI:83900"/>
    </ligand>
</feature>
<feature type="binding site" evidence="1">
    <location>
        <position position="183"/>
    </location>
    <ligand>
        <name>UDP-N-acetyl-alpha-D-muramoyl-L-alanyl-D-glutamate</name>
        <dbReference type="ChEBI" id="CHEBI:83900"/>
    </ligand>
</feature>
<feature type="binding site" evidence="1">
    <location>
        <position position="185"/>
    </location>
    <ligand>
        <name>UDP-N-acetyl-alpha-D-muramoyl-L-alanyl-D-glutamate</name>
        <dbReference type="ChEBI" id="CHEBI:83900"/>
    </ligand>
</feature>
<feature type="binding site" evidence="1">
    <location>
        <position position="378"/>
    </location>
    <ligand>
        <name>meso-2,6-diaminopimelate</name>
        <dbReference type="ChEBI" id="CHEBI:57791"/>
    </ligand>
</feature>
<feature type="binding site" evidence="1">
    <location>
        <begin position="402"/>
        <end position="405"/>
    </location>
    <ligand>
        <name>meso-2,6-diaminopimelate</name>
        <dbReference type="ChEBI" id="CHEBI:57791"/>
    </ligand>
</feature>
<feature type="binding site" evidence="1">
    <location>
        <position position="453"/>
    </location>
    <ligand>
        <name>meso-2,6-diaminopimelate</name>
        <dbReference type="ChEBI" id="CHEBI:57791"/>
    </ligand>
</feature>
<feature type="binding site" evidence="1">
    <location>
        <position position="457"/>
    </location>
    <ligand>
        <name>meso-2,6-diaminopimelate</name>
        <dbReference type="ChEBI" id="CHEBI:57791"/>
    </ligand>
</feature>
<feature type="modified residue" description="N6-carboxylysine" evidence="1">
    <location>
        <position position="217"/>
    </location>
</feature>
<keyword id="KW-0067">ATP-binding</keyword>
<keyword id="KW-0131">Cell cycle</keyword>
<keyword id="KW-0132">Cell division</keyword>
<keyword id="KW-0133">Cell shape</keyword>
<keyword id="KW-0961">Cell wall biogenesis/degradation</keyword>
<keyword id="KW-0963">Cytoplasm</keyword>
<keyword id="KW-0436">Ligase</keyword>
<keyword id="KW-0460">Magnesium</keyword>
<keyword id="KW-0547">Nucleotide-binding</keyword>
<keyword id="KW-0573">Peptidoglycan synthesis</keyword>
<reference key="1">
    <citation type="submission" date="2007-04" db="EMBL/GenBank/DDBJ databases">
        <title>Complete sequence of Pseudomonas mendocina ymp.</title>
        <authorList>
            <consortium name="US DOE Joint Genome Institute"/>
            <person name="Copeland A."/>
            <person name="Lucas S."/>
            <person name="Lapidus A."/>
            <person name="Barry K."/>
            <person name="Glavina del Rio T."/>
            <person name="Dalin E."/>
            <person name="Tice H."/>
            <person name="Pitluck S."/>
            <person name="Kiss H."/>
            <person name="Brettin T."/>
            <person name="Detter J.C."/>
            <person name="Bruce D."/>
            <person name="Han C."/>
            <person name="Schmutz J."/>
            <person name="Larimer F."/>
            <person name="Land M."/>
            <person name="Hauser L."/>
            <person name="Kyrpides N."/>
            <person name="Mikhailova N."/>
            <person name="Hersman L."/>
            <person name="Dubois J."/>
            <person name="Maurice P."/>
            <person name="Richardson P."/>
        </authorList>
    </citation>
    <scope>NUCLEOTIDE SEQUENCE [LARGE SCALE GENOMIC DNA]</scope>
    <source>
        <strain>ymp</strain>
    </source>
</reference>